<organism>
    <name type="scientific">Cerastes vipera</name>
    <name type="common">Sahara sand viper</name>
    <dbReference type="NCBI Taxonomy" id="8698"/>
    <lineage>
        <taxon>Eukaryota</taxon>
        <taxon>Metazoa</taxon>
        <taxon>Chordata</taxon>
        <taxon>Craniata</taxon>
        <taxon>Vertebrata</taxon>
        <taxon>Euteleostomi</taxon>
        <taxon>Lepidosauria</taxon>
        <taxon>Squamata</taxon>
        <taxon>Bifurcata</taxon>
        <taxon>Unidentata</taxon>
        <taxon>Episquamata</taxon>
        <taxon>Toxicofera</taxon>
        <taxon>Serpentes</taxon>
        <taxon>Colubroidea</taxon>
        <taxon>Viperidae</taxon>
        <taxon>Viperinae</taxon>
        <taxon>Cerastes</taxon>
    </lineage>
</organism>
<evidence type="ECO:0000250" key="1"/>
<evidence type="ECO:0000255" key="2">
    <source>
        <dbReference type="PROSITE-ProRule" id="PRU00274"/>
    </source>
</evidence>
<evidence type="ECO:0000269" key="3">
    <source>
    </source>
</evidence>
<evidence type="ECO:0000269" key="4">
    <source>
    </source>
</evidence>
<reference key="1">
    <citation type="journal article" date="1989" name="Biochemistry">
        <title>Characterization of cerastobin, a thrombin-like enzyme from the venom of Cerastes vipera (Sahara sand viper).</title>
        <authorList>
            <person name="Farid T.M."/>
            <person name="Tu A.T."/>
            <person name="El-Asmar M.F."/>
        </authorList>
    </citation>
    <scope>PROTEIN SEQUENCE</scope>
    <scope>FUNCTION</scope>
    <scope>BIOPHYSICOCHEMICAL PROPERTIES</scope>
    <source>
        <tissue>Venom</tissue>
    </source>
</reference>
<reference key="2">
    <citation type="journal article" date="1990" name="Haemostasis">
        <title>Effect of cerastobin, a thrombinlike enzyme from Cerastes vipera (Egyptian sand snake) venom, on human platelets.</title>
        <authorList>
            <person name="Farid T.M."/>
            <person name="Tu A.T."/>
            <person name="El-Asmar M.F."/>
        </authorList>
    </citation>
    <scope>FUNCTION</scope>
</reference>
<sequence>VIGGAKCNINEHRSIVLLYSSRLFGHTLINKEWVL</sequence>
<comment type="function">
    <text evidence="3 4">Thrombin-like snake venom serine protease, that cleaves both alpha-chain (FGA) and beta-chain (FGB) of fibrinogen. Partially degrades factor X (F10), and release bradykinin from kininogen (KNG). Potently induces platelet aggregation. Shows a proteolytic activity towards protein constituents of the platelets cytoskeleton. Hydrolyzes actin, actin-binding protein, and P235. Shows a preferential cleavage at Arg-|-Xaa bonds.</text>
</comment>
<comment type="activity regulation">
    <text>Inhibited by diisopropylfluorophosphate (DFP).</text>
</comment>
<comment type="biophysicochemical properties">
    <phDependence>
        <text evidence="4">Optimum pH is 7.9.</text>
    </phDependence>
    <temperatureDependence>
        <text evidence="4">Optimum temperature is 45 degrees Celsius.</text>
    </temperatureDependence>
</comment>
<comment type="subunit">
    <text evidence="1">Monomer.</text>
</comment>
<comment type="subcellular location">
    <subcellularLocation>
        <location>Secreted</location>
    </subcellularLocation>
</comment>
<comment type="tissue specificity">
    <text>Expressed by the venom gland.</text>
</comment>
<comment type="similarity">
    <text evidence="2">Belongs to the peptidase S1 family. Snake venom subfamily.</text>
</comment>
<feature type="chain" id="PRO_0000088737" description="Thrombin-like enzyme cerastobin">
    <location>
        <begin position="1"/>
        <end position="35" status="greater than"/>
    </location>
</feature>
<feature type="domain" description="Peptidase S1" evidence="2">
    <location>
        <begin position="1"/>
        <end position="35" status="greater than"/>
    </location>
</feature>
<feature type="non-terminal residue">
    <location>
        <position position="35"/>
    </location>
</feature>
<accession>P18692</accession>
<dbReference type="EC" id="3.4.21.-"/>
<dbReference type="PIR" id="A30104">
    <property type="entry name" value="A30104"/>
</dbReference>
<dbReference type="SMR" id="P18692"/>
<dbReference type="MEROPS" id="S01.337"/>
<dbReference type="GO" id="GO:0005576">
    <property type="term" value="C:extracellular region"/>
    <property type="evidence" value="ECO:0007669"/>
    <property type="project" value="UniProtKB-SubCell"/>
</dbReference>
<dbReference type="GO" id="GO:0008236">
    <property type="term" value="F:serine-type peptidase activity"/>
    <property type="evidence" value="ECO:0007669"/>
    <property type="project" value="UniProtKB-KW"/>
</dbReference>
<dbReference type="GO" id="GO:0090729">
    <property type="term" value="F:toxin activity"/>
    <property type="evidence" value="ECO:0007669"/>
    <property type="project" value="UniProtKB-KW"/>
</dbReference>
<dbReference type="GO" id="GO:0006508">
    <property type="term" value="P:proteolysis"/>
    <property type="evidence" value="ECO:0007669"/>
    <property type="project" value="UniProtKB-KW"/>
</dbReference>
<protein>
    <recommendedName>
        <fullName>Thrombin-like enzyme cerastobin</fullName>
        <shortName>SVTLE</shortName>
        <ecNumber>3.4.21.-</ecNumber>
    </recommendedName>
    <alternativeName>
        <fullName>Fibrinogen-clotting enzyme</fullName>
    </alternativeName>
    <alternativeName>
        <fullName>Snake venom serine protease</fullName>
        <shortName>SVSP</shortName>
    </alternativeName>
</protein>
<proteinExistence type="evidence at protein level"/>
<keyword id="KW-1204">Blood coagulation cascade activating toxin</keyword>
<keyword id="KW-0903">Direct protein sequencing</keyword>
<keyword id="KW-1199">Hemostasis impairing toxin</keyword>
<keyword id="KW-0378">Hydrolase</keyword>
<keyword id="KW-1202">Platelet aggregation activating toxin</keyword>
<keyword id="KW-0645">Protease</keyword>
<keyword id="KW-0964">Secreted</keyword>
<keyword id="KW-0720">Serine protease</keyword>
<keyword id="KW-0800">Toxin</keyword>
<name>VSPCE_CERVI</name>